<accession>A4W6S7</accession>
<dbReference type="EC" id="2.4.1.182" evidence="1"/>
<dbReference type="EMBL" id="CP000653">
    <property type="protein sequence ID" value="ABP59407.1"/>
    <property type="molecule type" value="Genomic_DNA"/>
</dbReference>
<dbReference type="RefSeq" id="WP_012016128.1">
    <property type="nucleotide sequence ID" value="NC_009436.1"/>
</dbReference>
<dbReference type="SMR" id="A4W6S7"/>
<dbReference type="STRING" id="399742.Ent638_0720"/>
<dbReference type="CAZy" id="GT19">
    <property type="family name" value="Glycosyltransferase Family 19"/>
</dbReference>
<dbReference type="KEGG" id="ent:Ent638_0720"/>
<dbReference type="eggNOG" id="COG0763">
    <property type="taxonomic scope" value="Bacteria"/>
</dbReference>
<dbReference type="HOGENOM" id="CLU_036577_3_0_6"/>
<dbReference type="OrthoDB" id="9801642at2"/>
<dbReference type="UniPathway" id="UPA00359">
    <property type="reaction ID" value="UER00481"/>
</dbReference>
<dbReference type="Proteomes" id="UP000000230">
    <property type="component" value="Chromosome"/>
</dbReference>
<dbReference type="GO" id="GO:0016020">
    <property type="term" value="C:membrane"/>
    <property type="evidence" value="ECO:0007669"/>
    <property type="project" value="GOC"/>
</dbReference>
<dbReference type="GO" id="GO:0008915">
    <property type="term" value="F:lipid-A-disaccharide synthase activity"/>
    <property type="evidence" value="ECO:0007669"/>
    <property type="project" value="UniProtKB-UniRule"/>
</dbReference>
<dbReference type="GO" id="GO:0005543">
    <property type="term" value="F:phospholipid binding"/>
    <property type="evidence" value="ECO:0007669"/>
    <property type="project" value="TreeGrafter"/>
</dbReference>
<dbReference type="GO" id="GO:0009245">
    <property type="term" value="P:lipid A biosynthetic process"/>
    <property type="evidence" value="ECO:0007669"/>
    <property type="project" value="UniProtKB-UniRule"/>
</dbReference>
<dbReference type="CDD" id="cd01635">
    <property type="entry name" value="Glycosyltransferase_GTB-type"/>
    <property type="match status" value="1"/>
</dbReference>
<dbReference type="Gene3D" id="3.40.50.2000">
    <property type="entry name" value="Glycogen Phosphorylase B"/>
    <property type="match status" value="1"/>
</dbReference>
<dbReference type="HAMAP" id="MF_00392">
    <property type="entry name" value="LpxB"/>
    <property type="match status" value="1"/>
</dbReference>
<dbReference type="InterPro" id="IPR003835">
    <property type="entry name" value="Glyco_trans_19"/>
</dbReference>
<dbReference type="NCBIfam" id="TIGR00215">
    <property type="entry name" value="lpxB"/>
    <property type="match status" value="1"/>
</dbReference>
<dbReference type="PANTHER" id="PTHR30372">
    <property type="entry name" value="LIPID-A-DISACCHARIDE SYNTHASE"/>
    <property type="match status" value="1"/>
</dbReference>
<dbReference type="PANTHER" id="PTHR30372:SF4">
    <property type="entry name" value="LIPID-A-DISACCHARIDE SYNTHASE, MITOCHONDRIAL-RELATED"/>
    <property type="match status" value="1"/>
</dbReference>
<dbReference type="Pfam" id="PF02684">
    <property type="entry name" value="LpxB"/>
    <property type="match status" value="1"/>
</dbReference>
<dbReference type="SUPFAM" id="SSF53756">
    <property type="entry name" value="UDP-Glycosyltransferase/glycogen phosphorylase"/>
    <property type="match status" value="1"/>
</dbReference>
<gene>
    <name evidence="1" type="primary">lpxB</name>
    <name type="ordered locus">Ent638_0720</name>
</gene>
<sequence length="382" mass="42414">MVDNRPLTIALVAGETSGDILGAGLIRALKAREPNARFVGVAGPLMQAEGCEAWYEMEELAVMGIVEVLGRLRRLLHIRADLTGRFTDLKPDVFVGIDAPDFNITLEGNLKKQGIKTIHYVSPSVWAWRQKRVFKIGRSTDMVLAFLPFEKAFYDRFNVPCRFIGHTMADAMPLDPDKNAARDSLGIPHDAHCLALLPGSRGAEVEMLSADFLRTAQILRQTYPDLEVVVPLVNAKRREQFERIKAAVAPDLHIHLLDGKGREAMVASDAALLASGTAALECMLAKCPMVVGYRMKPFTFWLAKRLVKTDYVSLPNLLAGRELVKELLQDECQPQALADALLPLLADGKTRHQMHDTFRELHQQIRCNADEQAADAVMELAQ</sequence>
<protein>
    <recommendedName>
        <fullName evidence="1">Lipid-A-disaccharide synthase</fullName>
        <ecNumber evidence="1">2.4.1.182</ecNumber>
    </recommendedName>
</protein>
<evidence type="ECO:0000255" key="1">
    <source>
        <dbReference type="HAMAP-Rule" id="MF_00392"/>
    </source>
</evidence>
<proteinExistence type="inferred from homology"/>
<keyword id="KW-0328">Glycosyltransferase</keyword>
<keyword id="KW-0441">Lipid A biosynthesis</keyword>
<keyword id="KW-0444">Lipid biosynthesis</keyword>
<keyword id="KW-0443">Lipid metabolism</keyword>
<keyword id="KW-0808">Transferase</keyword>
<reference key="1">
    <citation type="journal article" date="2010" name="PLoS Genet.">
        <title>Genome sequence of the plant growth promoting endophytic bacterium Enterobacter sp. 638.</title>
        <authorList>
            <person name="Taghavi S."/>
            <person name="van der Lelie D."/>
            <person name="Hoffman A."/>
            <person name="Zhang Y.B."/>
            <person name="Walla M.D."/>
            <person name="Vangronsveld J."/>
            <person name="Newman L."/>
            <person name="Monchy S."/>
        </authorList>
    </citation>
    <scope>NUCLEOTIDE SEQUENCE [LARGE SCALE GENOMIC DNA]</scope>
    <source>
        <strain>638</strain>
    </source>
</reference>
<comment type="function">
    <text evidence="1">Condensation of UDP-2,3-diacylglucosamine and 2,3-diacylglucosamine-1-phosphate to form lipid A disaccharide, a precursor of lipid A, a phosphorylated glycolipid that anchors the lipopolysaccharide to the outer membrane of the cell.</text>
</comment>
<comment type="catalytic activity">
    <reaction evidence="1">
        <text>2-N,3-O-bis[(3R)-3-hydroxytetradecanoyl]-alpha-D-glucosaminyl 1-phosphate + UDP-2-N,3-O-bis[(3R)-3-hydroxytetradecanoyl]-alpha-D-glucosamine = lipid A disaccharide (E. coli) + UDP + H(+)</text>
        <dbReference type="Rhea" id="RHEA:22668"/>
        <dbReference type="ChEBI" id="CHEBI:15378"/>
        <dbReference type="ChEBI" id="CHEBI:57957"/>
        <dbReference type="ChEBI" id="CHEBI:58223"/>
        <dbReference type="ChEBI" id="CHEBI:58466"/>
        <dbReference type="ChEBI" id="CHEBI:78847"/>
    </reaction>
</comment>
<comment type="catalytic activity">
    <reaction evidence="1">
        <text>a lipid X + a UDP-2-N,3-O-bis[(3R)-3-hydroxyacyl]-alpha-D-glucosamine = a lipid A disaccharide + UDP + H(+)</text>
        <dbReference type="Rhea" id="RHEA:67828"/>
        <dbReference type="ChEBI" id="CHEBI:15378"/>
        <dbReference type="ChEBI" id="CHEBI:58223"/>
        <dbReference type="ChEBI" id="CHEBI:137748"/>
        <dbReference type="ChEBI" id="CHEBI:176338"/>
        <dbReference type="ChEBI" id="CHEBI:176343"/>
        <dbReference type="EC" id="2.4.1.182"/>
    </reaction>
</comment>
<comment type="pathway">
    <text evidence="1">Glycolipid biosynthesis; lipid IV(A) biosynthesis; lipid IV(A) from (3R)-3-hydroxytetradecanoyl-[acyl-carrier-protein] and UDP-N-acetyl-alpha-D-glucosamine: step 5/6.</text>
</comment>
<comment type="similarity">
    <text evidence="1">Belongs to the LpxB family.</text>
</comment>
<feature type="chain" id="PRO_1000060771" description="Lipid-A-disaccharide synthase">
    <location>
        <begin position="1"/>
        <end position="382"/>
    </location>
</feature>
<name>LPXB_ENT38</name>
<organism>
    <name type="scientific">Enterobacter sp. (strain 638)</name>
    <dbReference type="NCBI Taxonomy" id="399742"/>
    <lineage>
        <taxon>Bacteria</taxon>
        <taxon>Pseudomonadati</taxon>
        <taxon>Pseudomonadota</taxon>
        <taxon>Gammaproteobacteria</taxon>
        <taxon>Enterobacterales</taxon>
        <taxon>Enterobacteriaceae</taxon>
        <taxon>Enterobacter</taxon>
    </lineage>
</organism>